<organism>
    <name type="scientific">Tityus pachyurus</name>
    <name type="common">Colombian scorpion</name>
    <dbReference type="NCBI Taxonomy" id="288781"/>
    <lineage>
        <taxon>Eukaryota</taxon>
        <taxon>Metazoa</taxon>
        <taxon>Ecdysozoa</taxon>
        <taxon>Arthropoda</taxon>
        <taxon>Chelicerata</taxon>
        <taxon>Arachnida</taxon>
        <taxon>Scorpiones</taxon>
        <taxon>Buthida</taxon>
        <taxon>Buthoidea</taxon>
        <taxon>Buthidae</taxon>
        <taxon>Tityus</taxon>
    </lineage>
</organism>
<reference evidence="5" key="1">
    <citation type="journal article" date="2006" name="Biochim. Biophys. Acta">
        <title>Proteomic analysis of the venom and characterization of toxins specific for Na+ - and K+ -channels from the Colombian scorpion Tityus pachyurus.</title>
        <authorList>
            <person name="Barona J."/>
            <person name="Batista C.V.F."/>
            <person name="Zamudio F.Z."/>
            <person name="Gomez-Lagunas F."/>
            <person name="Wanke E."/>
            <person name="Otero R."/>
            <person name="Possani L.D."/>
        </authorList>
    </citation>
    <scope>PROTEIN SEQUENCE</scope>
    <scope>FUNCTION</scope>
    <scope>SUBCELLULAR LOCATION</scope>
    <scope>TISSUE SPECIFICITY</scope>
    <scope>MASS SPECTROMETRY</scope>
    <scope>AMIDATION AT TYR-23</scope>
    <source>
        <tissue evidence="4">Venom</tissue>
    </source>
</reference>
<sequence length="23" mass="2464">ACGSCRKKCKGPGKCINGRCKCY</sequence>
<feature type="peptide" id="PRO_0000239431" description="Potassium channel toxin alpha-KTx 13.3">
    <location>
        <begin position="1"/>
        <end position="23"/>
    </location>
</feature>
<feature type="region of interest" description="Interaction with Ca(2+)-activated K(+) channels" evidence="2 3">
    <location>
        <begin position="13"/>
        <end position="20"/>
    </location>
</feature>
<feature type="site" description="Basic residue of the functional dyad" evidence="1">
    <location>
        <position position="14"/>
    </location>
</feature>
<feature type="site" description="Aromatic residue of the functional dyad" evidence="1">
    <location>
        <position position="23"/>
    </location>
</feature>
<feature type="modified residue" description="Tyrosine amide" evidence="4">
    <location>
        <position position="23"/>
    </location>
</feature>
<feature type="disulfide bond" evidence="2">
    <location>
        <begin position="2"/>
        <end position="15"/>
    </location>
</feature>
<feature type="disulfide bond" evidence="2">
    <location>
        <begin position="5"/>
        <end position="20"/>
    </location>
</feature>
<feature type="disulfide bond" evidence="2">
    <location>
        <begin position="9"/>
        <end position="22"/>
    </location>
</feature>
<protein>
    <recommendedName>
        <fullName>Potassium channel toxin alpha-KTx 13.3</fullName>
    </recommendedName>
    <alternativeName>
        <fullName>Toxin Tpa1</fullName>
    </alternativeName>
</protein>
<accession>P84630</accession>
<name>KA133_TITPA</name>
<comment type="function">
    <text evidence="4">Reversibly blocks Shaker B potassium channels, with a dissociation constant of 200 nM.</text>
</comment>
<comment type="subcellular location">
    <subcellularLocation>
        <location evidence="4">Secreted</location>
    </subcellularLocation>
</comment>
<comment type="tissue specificity">
    <text evidence="4">Expressed by the venom gland.</text>
</comment>
<comment type="domain">
    <text evidence="5">Has the structural arrangement of an alpha-helix connected to antiparallel beta-sheets by disulfide bonds (CS-alpha/beta).</text>
</comment>
<comment type="mass spectrometry" mass="2457.0" method="Electrospray" evidence="4"/>
<comment type="similarity">
    <text evidence="3">Belongs to the short scorpion toxin superfamily. Potassium channel inhibitor family. Alpha-KTx 13 subfamily.</text>
</comment>
<evidence type="ECO:0000250" key="1"/>
<evidence type="ECO:0000250" key="2">
    <source>
        <dbReference type="UniProtKB" id="P83243"/>
    </source>
</evidence>
<evidence type="ECO:0000255" key="3"/>
<evidence type="ECO:0000269" key="4">
    <source>
    </source>
</evidence>
<evidence type="ECO:0000305" key="5"/>
<keyword id="KW-0027">Amidation</keyword>
<keyword id="KW-0903">Direct protein sequencing</keyword>
<keyword id="KW-1015">Disulfide bond</keyword>
<keyword id="KW-0872">Ion channel impairing toxin</keyword>
<keyword id="KW-0528">Neurotoxin</keyword>
<keyword id="KW-0632">Potassium channel impairing toxin</keyword>
<keyword id="KW-0964">Secreted</keyword>
<keyword id="KW-0800">Toxin</keyword>
<proteinExistence type="evidence at protein level"/>
<dbReference type="GO" id="GO:0005576">
    <property type="term" value="C:extracellular region"/>
    <property type="evidence" value="ECO:0007669"/>
    <property type="project" value="UniProtKB-SubCell"/>
</dbReference>
<dbReference type="GO" id="GO:0015459">
    <property type="term" value="F:potassium channel regulator activity"/>
    <property type="evidence" value="ECO:0007669"/>
    <property type="project" value="UniProtKB-KW"/>
</dbReference>
<dbReference type="GO" id="GO:0090729">
    <property type="term" value="F:toxin activity"/>
    <property type="evidence" value="ECO:0007669"/>
    <property type="project" value="UniProtKB-KW"/>
</dbReference>
<dbReference type="InterPro" id="IPR036574">
    <property type="entry name" value="Scorpion_toxin-like_sf"/>
</dbReference>
<dbReference type="SUPFAM" id="SSF57095">
    <property type="entry name" value="Scorpion toxin-like"/>
    <property type="match status" value="1"/>
</dbReference>